<gene>
    <name evidence="1" type="primary">rplS</name>
    <name type="ordered locus">BUAPTUC7_391</name>
</gene>
<sequence>MFSIIQKIEKEQIKKNIPIFRSGDTIEVKVWVIEGSKKRLQSFEGIVIAIKNRCLNSSFTVRKISNGEGVERVFQTHSHGIEEILVKRKGLVRKAKLYYLRTRTGKAARIKERLN</sequence>
<comment type="function">
    <text evidence="1">This protein is located at the 30S-50S ribosomal subunit interface and may play a role in the structure and function of the aminoacyl-tRNA binding site.</text>
</comment>
<comment type="similarity">
    <text evidence="1">Belongs to the bacterial ribosomal protein bL19 family.</text>
</comment>
<proteinExistence type="inferred from homology"/>
<feature type="chain" id="PRO_1000134560" description="Large ribosomal subunit protein bL19">
    <location>
        <begin position="1"/>
        <end position="115"/>
    </location>
</feature>
<protein>
    <recommendedName>
        <fullName evidence="1">Large ribosomal subunit protein bL19</fullName>
    </recommendedName>
    <alternativeName>
        <fullName evidence="2">50S ribosomal protein L19</fullName>
    </alternativeName>
</protein>
<evidence type="ECO:0000255" key="1">
    <source>
        <dbReference type="HAMAP-Rule" id="MF_00402"/>
    </source>
</evidence>
<evidence type="ECO:0000305" key="2"/>
<name>RL19_BUCAT</name>
<organism>
    <name type="scientific">Buchnera aphidicola subsp. Acyrthosiphon pisum (strain Tuc7)</name>
    <dbReference type="NCBI Taxonomy" id="561501"/>
    <lineage>
        <taxon>Bacteria</taxon>
        <taxon>Pseudomonadati</taxon>
        <taxon>Pseudomonadota</taxon>
        <taxon>Gammaproteobacteria</taxon>
        <taxon>Enterobacterales</taxon>
        <taxon>Erwiniaceae</taxon>
        <taxon>Buchnera</taxon>
    </lineage>
</organism>
<accession>B8D7T2</accession>
<reference key="1">
    <citation type="journal article" date="2009" name="Science">
        <title>The dynamics and time scale of ongoing genomic erosion in symbiotic bacteria.</title>
        <authorList>
            <person name="Moran N.A."/>
            <person name="McLaughlin H.J."/>
            <person name="Sorek R."/>
        </authorList>
    </citation>
    <scope>NUCLEOTIDE SEQUENCE [LARGE SCALE GENOMIC DNA]</scope>
    <source>
        <strain>Tuc7</strain>
    </source>
</reference>
<keyword id="KW-0687">Ribonucleoprotein</keyword>
<keyword id="KW-0689">Ribosomal protein</keyword>
<dbReference type="EMBL" id="CP001158">
    <property type="protein sequence ID" value="ACL30197.1"/>
    <property type="molecule type" value="Genomic_DNA"/>
</dbReference>
<dbReference type="RefSeq" id="WP_012619533.1">
    <property type="nucleotide sequence ID" value="NC_011834.1"/>
</dbReference>
<dbReference type="SMR" id="B8D7T2"/>
<dbReference type="KEGG" id="bau:BUAPTUC7_391"/>
<dbReference type="HOGENOM" id="CLU_103507_2_2_6"/>
<dbReference type="GO" id="GO:0022625">
    <property type="term" value="C:cytosolic large ribosomal subunit"/>
    <property type="evidence" value="ECO:0007669"/>
    <property type="project" value="TreeGrafter"/>
</dbReference>
<dbReference type="GO" id="GO:0003735">
    <property type="term" value="F:structural constituent of ribosome"/>
    <property type="evidence" value="ECO:0007669"/>
    <property type="project" value="InterPro"/>
</dbReference>
<dbReference type="GO" id="GO:0006412">
    <property type="term" value="P:translation"/>
    <property type="evidence" value="ECO:0007669"/>
    <property type="project" value="UniProtKB-UniRule"/>
</dbReference>
<dbReference type="FunFam" id="2.30.30.790:FF:000001">
    <property type="entry name" value="50S ribosomal protein L19"/>
    <property type="match status" value="1"/>
</dbReference>
<dbReference type="Gene3D" id="2.30.30.790">
    <property type="match status" value="1"/>
</dbReference>
<dbReference type="HAMAP" id="MF_00402">
    <property type="entry name" value="Ribosomal_bL19"/>
    <property type="match status" value="1"/>
</dbReference>
<dbReference type="InterPro" id="IPR001857">
    <property type="entry name" value="Ribosomal_bL19"/>
</dbReference>
<dbReference type="InterPro" id="IPR018257">
    <property type="entry name" value="Ribosomal_bL19_CS"/>
</dbReference>
<dbReference type="InterPro" id="IPR038657">
    <property type="entry name" value="Ribosomal_bL19_sf"/>
</dbReference>
<dbReference type="InterPro" id="IPR008991">
    <property type="entry name" value="Translation_prot_SH3-like_sf"/>
</dbReference>
<dbReference type="NCBIfam" id="TIGR01024">
    <property type="entry name" value="rplS_bact"/>
    <property type="match status" value="1"/>
</dbReference>
<dbReference type="PANTHER" id="PTHR15680:SF9">
    <property type="entry name" value="LARGE RIBOSOMAL SUBUNIT PROTEIN BL19M"/>
    <property type="match status" value="1"/>
</dbReference>
<dbReference type="PANTHER" id="PTHR15680">
    <property type="entry name" value="RIBOSOMAL PROTEIN L19"/>
    <property type="match status" value="1"/>
</dbReference>
<dbReference type="Pfam" id="PF01245">
    <property type="entry name" value="Ribosomal_L19"/>
    <property type="match status" value="1"/>
</dbReference>
<dbReference type="PIRSF" id="PIRSF002191">
    <property type="entry name" value="Ribosomal_L19"/>
    <property type="match status" value="1"/>
</dbReference>
<dbReference type="PRINTS" id="PR00061">
    <property type="entry name" value="RIBOSOMALL19"/>
</dbReference>
<dbReference type="SUPFAM" id="SSF50104">
    <property type="entry name" value="Translation proteins SH3-like domain"/>
    <property type="match status" value="1"/>
</dbReference>
<dbReference type="PROSITE" id="PS01015">
    <property type="entry name" value="RIBOSOMAL_L19"/>
    <property type="match status" value="1"/>
</dbReference>